<dbReference type="EC" id="6.1.1.1" evidence="1"/>
<dbReference type="EMBL" id="AP008981">
    <property type="protein sequence ID" value="BAG41229.1"/>
    <property type="molecule type" value="Genomic_DNA"/>
</dbReference>
<dbReference type="RefSeq" id="WP_012462189.1">
    <property type="nucleotide sequence ID" value="NC_010793.1"/>
</dbReference>
<dbReference type="SMR" id="B3CV32"/>
<dbReference type="KEGG" id="ott:OTT_1771"/>
<dbReference type="HOGENOM" id="CLU_024003_0_3_5"/>
<dbReference type="OrthoDB" id="9804243at2"/>
<dbReference type="Proteomes" id="UP000001033">
    <property type="component" value="Chromosome"/>
</dbReference>
<dbReference type="GO" id="GO:0005829">
    <property type="term" value="C:cytosol"/>
    <property type="evidence" value="ECO:0007669"/>
    <property type="project" value="TreeGrafter"/>
</dbReference>
<dbReference type="GO" id="GO:0005524">
    <property type="term" value="F:ATP binding"/>
    <property type="evidence" value="ECO:0007669"/>
    <property type="project" value="UniProtKB-UniRule"/>
</dbReference>
<dbReference type="GO" id="GO:0003723">
    <property type="term" value="F:RNA binding"/>
    <property type="evidence" value="ECO:0007669"/>
    <property type="project" value="UniProtKB-KW"/>
</dbReference>
<dbReference type="GO" id="GO:0004831">
    <property type="term" value="F:tyrosine-tRNA ligase activity"/>
    <property type="evidence" value="ECO:0007669"/>
    <property type="project" value="UniProtKB-UniRule"/>
</dbReference>
<dbReference type="GO" id="GO:0006437">
    <property type="term" value="P:tyrosyl-tRNA aminoacylation"/>
    <property type="evidence" value="ECO:0007669"/>
    <property type="project" value="UniProtKB-UniRule"/>
</dbReference>
<dbReference type="CDD" id="cd00805">
    <property type="entry name" value="TyrRS_core"/>
    <property type="match status" value="1"/>
</dbReference>
<dbReference type="Gene3D" id="3.40.50.620">
    <property type="entry name" value="HUPs"/>
    <property type="match status" value="1"/>
</dbReference>
<dbReference type="Gene3D" id="3.10.290.10">
    <property type="entry name" value="RNA-binding S4 domain"/>
    <property type="match status" value="1"/>
</dbReference>
<dbReference type="Gene3D" id="1.10.240.10">
    <property type="entry name" value="Tyrosyl-Transfer RNA Synthetase"/>
    <property type="match status" value="1"/>
</dbReference>
<dbReference type="HAMAP" id="MF_02006">
    <property type="entry name" value="Tyr_tRNA_synth_type1"/>
    <property type="match status" value="1"/>
</dbReference>
<dbReference type="InterPro" id="IPR002305">
    <property type="entry name" value="aa-tRNA-synth_Ic"/>
</dbReference>
<dbReference type="InterPro" id="IPR014729">
    <property type="entry name" value="Rossmann-like_a/b/a_fold"/>
</dbReference>
<dbReference type="InterPro" id="IPR036986">
    <property type="entry name" value="S4_RNA-bd_sf"/>
</dbReference>
<dbReference type="InterPro" id="IPR054608">
    <property type="entry name" value="SYY-like_C"/>
</dbReference>
<dbReference type="InterPro" id="IPR002307">
    <property type="entry name" value="Tyr-tRNA-ligase"/>
</dbReference>
<dbReference type="InterPro" id="IPR024088">
    <property type="entry name" value="Tyr-tRNA-ligase_bac-type"/>
</dbReference>
<dbReference type="InterPro" id="IPR024107">
    <property type="entry name" value="Tyr-tRNA-ligase_bac_1"/>
</dbReference>
<dbReference type="NCBIfam" id="TIGR00234">
    <property type="entry name" value="tyrS"/>
    <property type="match status" value="1"/>
</dbReference>
<dbReference type="PANTHER" id="PTHR11766:SF0">
    <property type="entry name" value="TYROSINE--TRNA LIGASE, MITOCHONDRIAL"/>
    <property type="match status" value="1"/>
</dbReference>
<dbReference type="PANTHER" id="PTHR11766">
    <property type="entry name" value="TYROSYL-TRNA SYNTHETASE"/>
    <property type="match status" value="1"/>
</dbReference>
<dbReference type="Pfam" id="PF22421">
    <property type="entry name" value="SYY_C-terminal"/>
    <property type="match status" value="1"/>
</dbReference>
<dbReference type="Pfam" id="PF00579">
    <property type="entry name" value="tRNA-synt_1b"/>
    <property type="match status" value="1"/>
</dbReference>
<dbReference type="PRINTS" id="PR01040">
    <property type="entry name" value="TRNASYNTHTYR"/>
</dbReference>
<dbReference type="SUPFAM" id="SSF55174">
    <property type="entry name" value="Alpha-L RNA-binding motif"/>
    <property type="match status" value="1"/>
</dbReference>
<dbReference type="SUPFAM" id="SSF52374">
    <property type="entry name" value="Nucleotidylyl transferase"/>
    <property type="match status" value="1"/>
</dbReference>
<dbReference type="PROSITE" id="PS50889">
    <property type="entry name" value="S4"/>
    <property type="match status" value="1"/>
</dbReference>
<gene>
    <name evidence="1" type="primary">tyrS</name>
    <name type="ordered locus">OTT_1771</name>
</gene>
<keyword id="KW-0030">Aminoacyl-tRNA synthetase</keyword>
<keyword id="KW-0067">ATP-binding</keyword>
<keyword id="KW-0963">Cytoplasm</keyword>
<keyword id="KW-0436">Ligase</keyword>
<keyword id="KW-0547">Nucleotide-binding</keyword>
<keyword id="KW-0648">Protein biosynthesis</keyword>
<keyword id="KW-0694">RNA-binding</keyword>
<comment type="function">
    <text evidence="1">Catalyzes the attachment of tyrosine to tRNA(Tyr) in a two-step reaction: tyrosine is first activated by ATP to form Tyr-AMP and then transferred to the acceptor end of tRNA(Tyr).</text>
</comment>
<comment type="catalytic activity">
    <reaction evidence="1">
        <text>tRNA(Tyr) + L-tyrosine + ATP = L-tyrosyl-tRNA(Tyr) + AMP + diphosphate + H(+)</text>
        <dbReference type="Rhea" id="RHEA:10220"/>
        <dbReference type="Rhea" id="RHEA-COMP:9706"/>
        <dbReference type="Rhea" id="RHEA-COMP:9707"/>
        <dbReference type="ChEBI" id="CHEBI:15378"/>
        <dbReference type="ChEBI" id="CHEBI:30616"/>
        <dbReference type="ChEBI" id="CHEBI:33019"/>
        <dbReference type="ChEBI" id="CHEBI:58315"/>
        <dbReference type="ChEBI" id="CHEBI:78442"/>
        <dbReference type="ChEBI" id="CHEBI:78536"/>
        <dbReference type="ChEBI" id="CHEBI:456215"/>
        <dbReference type="EC" id="6.1.1.1"/>
    </reaction>
</comment>
<comment type="subunit">
    <text evidence="1">Homodimer.</text>
</comment>
<comment type="subcellular location">
    <subcellularLocation>
        <location evidence="1">Cytoplasm</location>
    </subcellularLocation>
</comment>
<comment type="similarity">
    <text evidence="1">Belongs to the class-I aminoacyl-tRNA synthetase family. TyrS type 1 subfamily.</text>
</comment>
<evidence type="ECO:0000255" key="1">
    <source>
        <dbReference type="HAMAP-Rule" id="MF_02006"/>
    </source>
</evidence>
<protein>
    <recommendedName>
        <fullName evidence="1">Tyrosine--tRNA ligase</fullName>
        <ecNumber evidence="1">6.1.1.1</ecNumber>
    </recommendedName>
    <alternativeName>
        <fullName evidence="1">Tyrosyl-tRNA synthetase</fullName>
        <shortName evidence="1">TyrRS</shortName>
    </alternativeName>
</protein>
<accession>B3CV32</accession>
<name>SYY_ORITI</name>
<organism>
    <name type="scientific">Orientia tsutsugamushi (strain Ikeda)</name>
    <name type="common">Rickettsia tsutsugamushi</name>
    <dbReference type="NCBI Taxonomy" id="334380"/>
    <lineage>
        <taxon>Bacteria</taxon>
        <taxon>Pseudomonadati</taxon>
        <taxon>Pseudomonadota</taxon>
        <taxon>Alphaproteobacteria</taxon>
        <taxon>Rickettsiales</taxon>
        <taxon>Rickettsiaceae</taxon>
        <taxon>Rickettsieae</taxon>
        <taxon>Orientia</taxon>
    </lineage>
</organism>
<sequence length="413" mass="47311">MHFINEFINRGYFYQSTDLTRLTQISNSSQIVAYIGFDCTAQSLHVGNLMQIMILRLLQQCGHKSIVVIGGATTKIGDPSEKDKLRRIITNDEIQQNISGIKRSLKKFIKFDETKNDVLLLNNQEWLDSINYINFLRDYGRAFSVNKMLTMNSVKSRLERHTPLSFLEFNYMLLQAYDFYYLNKYYNCNLQIGGSDQWGNITMGVDLVKKLSNNEVFGLTTPLITNSSGEKMGKTADGAVWLNEDMCSPYNYFQYWRNIEDNDVIRFAKLYGEFSEVELSKLTELFFNNVNEAKKQIAYKITLLCHGRDEANKALNTAIQMFEHKKADENLPTFTIKDCNNLKVGIPITELLVTIGLAKTKSEGKRLIQGNGIRINNIKVNNINLVVQLHDFIDQVITVSLGKKCHILVKIAK</sequence>
<reference key="1">
    <citation type="journal article" date="2008" name="DNA Res.">
        <title>The whole-genome sequencing of the obligate intracellular bacterium Orientia tsutsugamushi revealed massive gene amplification during reductive genome evolution.</title>
        <authorList>
            <person name="Nakayama K."/>
            <person name="Yamashita A."/>
            <person name="Kurokawa K."/>
            <person name="Morimoto T."/>
            <person name="Ogawa M."/>
            <person name="Fukuhara M."/>
            <person name="Urakami H."/>
            <person name="Ohnishi M."/>
            <person name="Uchiyama I."/>
            <person name="Ogura Y."/>
            <person name="Ooka T."/>
            <person name="Oshima K."/>
            <person name="Tamura A."/>
            <person name="Hattori M."/>
            <person name="Hayashi T."/>
        </authorList>
    </citation>
    <scope>NUCLEOTIDE SEQUENCE [LARGE SCALE GENOMIC DNA]</scope>
    <source>
        <strain>Ikeda</strain>
    </source>
</reference>
<proteinExistence type="inferred from homology"/>
<feature type="chain" id="PRO_1000189314" description="Tyrosine--tRNA ligase">
    <location>
        <begin position="1"/>
        <end position="413"/>
    </location>
</feature>
<feature type="domain" description="S4 RNA-binding" evidence="1">
    <location>
        <begin position="346"/>
        <end position="411"/>
    </location>
</feature>
<feature type="short sequence motif" description="'HIGH' region">
    <location>
        <begin position="39"/>
        <end position="48"/>
    </location>
</feature>
<feature type="short sequence motif" description="'KMSKS' region">
    <location>
        <begin position="231"/>
        <end position="235"/>
    </location>
</feature>
<feature type="binding site" evidence="1">
    <location>
        <position position="34"/>
    </location>
    <ligand>
        <name>L-tyrosine</name>
        <dbReference type="ChEBI" id="CHEBI:58315"/>
    </ligand>
</feature>
<feature type="binding site" evidence="1">
    <location>
        <position position="171"/>
    </location>
    <ligand>
        <name>L-tyrosine</name>
        <dbReference type="ChEBI" id="CHEBI:58315"/>
    </ligand>
</feature>
<feature type="binding site" evidence="1">
    <location>
        <position position="175"/>
    </location>
    <ligand>
        <name>L-tyrosine</name>
        <dbReference type="ChEBI" id="CHEBI:58315"/>
    </ligand>
</feature>
<feature type="binding site" evidence="1">
    <location>
        <position position="234"/>
    </location>
    <ligand>
        <name>ATP</name>
        <dbReference type="ChEBI" id="CHEBI:30616"/>
    </ligand>
</feature>